<feature type="chain" id="PRO_0000289573" description="Protein PsbN">
    <location>
        <begin position="1"/>
        <end position="43"/>
    </location>
</feature>
<feature type="transmembrane region" description="Helical" evidence="1">
    <location>
        <begin position="5"/>
        <end position="27"/>
    </location>
</feature>
<evidence type="ECO:0000255" key="1">
    <source>
        <dbReference type="HAMAP-Rule" id="MF_00293"/>
    </source>
</evidence>
<keyword id="KW-0150">Chloroplast</keyword>
<keyword id="KW-0472">Membrane</keyword>
<keyword id="KW-0934">Plastid</keyword>
<keyword id="KW-1185">Reference proteome</keyword>
<keyword id="KW-0793">Thylakoid</keyword>
<keyword id="KW-0812">Transmembrane</keyword>
<keyword id="KW-1133">Transmembrane helix</keyword>
<geneLocation type="chloroplast"/>
<proteinExistence type="inferred from homology"/>
<name>PSBN_ORYSI</name>
<accession>P0C419</accession>
<organism>
    <name type="scientific">Oryza sativa subsp. indica</name>
    <name type="common">Rice</name>
    <dbReference type="NCBI Taxonomy" id="39946"/>
    <lineage>
        <taxon>Eukaryota</taxon>
        <taxon>Viridiplantae</taxon>
        <taxon>Streptophyta</taxon>
        <taxon>Embryophyta</taxon>
        <taxon>Tracheophyta</taxon>
        <taxon>Spermatophyta</taxon>
        <taxon>Magnoliopsida</taxon>
        <taxon>Liliopsida</taxon>
        <taxon>Poales</taxon>
        <taxon>Poaceae</taxon>
        <taxon>BOP clade</taxon>
        <taxon>Oryzoideae</taxon>
        <taxon>Oryzeae</taxon>
        <taxon>Oryzinae</taxon>
        <taxon>Oryza</taxon>
        <taxon>Oryza sativa</taxon>
    </lineage>
</organism>
<sequence>METATLVAISISGLLVSFTGYALYTAFGQPSQQLRDPFEEHGD</sequence>
<reference key="1">
    <citation type="journal article" date="2004" name="Plant Physiol.">
        <title>A comparison of rice chloroplast genomes.</title>
        <authorList>
            <person name="Tang J."/>
            <person name="Xia H."/>
            <person name="Cao M."/>
            <person name="Zhang X."/>
            <person name="Zeng W."/>
            <person name="Hu S."/>
            <person name="Tong W."/>
            <person name="Wang J."/>
            <person name="Wang J."/>
            <person name="Yu J."/>
            <person name="Yang H."/>
            <person name="Zhu L."/>
        </authorList>
    </citation>
    <scope>NUCLEOTIDE SEQUENCE [LARGE SCALE GENOMIC DNA]</scope>
    <source>
        <strain>cv. 93-11</strain>
    </source>
</reference>
<gene>
    <name evidence="1" type="primary">psbN</name>
</gene>
<dbReference type="EMBL" id="AY522329">
    <property type="status" value="NOT_ANNOTATED_CDS"/>
    <property type="molecule type" value="Genomic_DNA"/>
</dbReference>
<dbReference type="RefSeq" id="YP_009161391.1">
    <property type="nucleotide sequence ID" value="NC_027678.1"/>
</dbReference>
<dbReference type="SMR" id="P0C419"/>
<dbReference type="STRING" id="39946.P0C419"/>
<dbReference type="Proteomes" id="UP000007015">
    <property type="component" value="Chloroplast"/>
</dbReference>
<dbReference type="GO" id="GO:0009535">
    <property type="term" value="C:chloroplast thylakoid membrane"/>
    <property type="evidence" value="ECO:0007669"/>
    <property type="project" value="UniProtKB-SubCell"/>
</dbReference>
<dbReference type="GO" id="GO:0009536">
    <property type="term" value="C:plastid"/>
    <property type="evidence" value="ECO:0000305"/>
    <property type="project" value="Gramene"/>
</dbReference>
<dbReference type="GO" id="GO:0015979">
    <property type="term" value="P:photosynthesis"/>
    <property type="evidence" value="ECO:0007669"/>
    <property type="project" value="InterPro"/>
</dbReference>
<dbReference type="HAMAP" id="MF_00293">
    <property type="entry name" value="PSII_PsbN"/>
    <property type="match status" value="1"/>
</dbReference>
<dbReference type="InterPro" id="IPR003398">
    <property type="entry name" value="PSII_PsbN"/>
</dbReference>
<dbReference type="PANTHER" id="PTHR35326">
    <property type="entry name" value="PROTEIN PSBN"/>
    <property type="match status" value="1"/>
</dbReference>
<dbReference type="PANTHER" id="PTHR35326:SF3">
    <property type="entry name" value="PROTEIN PSBN"/>
    <property type="match status" value="1"/>
</dbReference>
<dbReference type="Pfam" id="PF02468">
    <property type="entry name" value="PsbN"/>
    <property type="match status" value="1"/>
</dbReference>
<comment type="function">
    <text evidence="1">May play a role in photosystem I and II biogenesis.</text>
</comment>
<comment type="subcellular location">
    <subcellularLocation>
        <location evidence="1">Plastid</location>
        <location evidence="1">Chloroplast thylakoid membrane</location>
        <topology evidence="1">Single-pass membrane protein</topology>
    </subcellularLocation>
</comment>
<comment type="similarity">
    <text evidence="1">Belongs to the PsbN family.</text>
</comment>
<comment type="caution">
    <text evidence="1">Originally thought to be a component of PSII; based on experiments in Synechocystis, N.tabacum and barley, and its absence from PSII in T.elongatus and T.vulcanus, this is probably not true.</text>
</comment>
<protein>
    <recommendedName>
        <fullName evidence="1">Protein PsbN</fullName>
    </recommendedName>
</protein>